<reference key="1">
    <citation type="journal article" date="2003" name="Lancet">
        <title>Genome sequence of Vibrio parahaemolyticus: a pathogenic mechanism distinct from that of V. cholerae.</title>
        <authorList>
            <person name="Makino K."/>
            <person name="Oshima K."/>
            <person name="Kurokawa K."/>
            <person name="Yokoyama K."/>
            <person name="Uda T."/>
            <person name="Tagomori K."/>
            <person name="Iijima Y."/>
            <person name="Najima M."/>
            <person name="Nakano M."/>
            <person name="Yamashita A."/>
            <person name="Kubota Y."/>
            <person name="Kimura S."/>
            <person name="Yasunaga T."/>
            <person name="Honda T."/>
            <person name="Shinagawa H."/>
            <person name="Hattori M."/>
            <person name="Iida T."/>
        </authorList>
    </citation>
    <scope>NUCLEOTIDE SEQUENCE [LARGE SCALE GENOMIC DNA]</scope>
    <source>
        <strain>RIMD 2210633</strain>
    </source>
</reference>
<evidence type="ECO:0000255" key="1">
    <source>
        <dbReference type="HAMAP-Rule" id="MF_00048"/>
    </source>
</evidence>
<sequence length="121" mass="14240">MGLFSKRQIGNQYETLAKQYLQRQGLRFLDQNYLTKFGEIDLIFQQDETIVFVEVKYRKNDHFGSAAEMVTNAKMRKLIKTAQVWLSQQRTMNTIDYRFDVIAIHDSGRDINWIQNAISEG</sequence>
<protein>
    <recommendedName>
        <fullName evidence="1">UPF0102 protein VP0448</fullName>
    </recommendedName>
</protein>
<feature type="chain" id="PRO_0000167389" description="UPF0102 protein VP0448">
    <location>
        <begin position="1"/>
        <end position="121"/>
    </location>
</feature>
<dbReference type="EMBL" id="BA000031">
    <property type="protein sequence ID" value="BAC58711.1"/>
    <property type="molecule type" value="Genomic_DNA"/>
</dbReference>
<dbReference type="RefSeq" id="NP_796827.1">
    <property type="nucleotide sequence ID" value="NC_004603.1"/>
</dbReference>
<dbReference type="RefSeq" id="WP_005479720.1">
    <property type="nucleotide sequence ID" value="NC_004603.1"/>
</dbReference>
<dbReference type="SMR" id="Q87SH5"/>
<dbReference type="GeneID" id="1187916"/>
<dbReference type="KEGG" id="vpa:VP0448"/>
<dbReference type="PATRIC" id="fig|223926.6.peg.426"/>
<dbReference type="eggNOG" id="COG0792">
    <property type="taxonomic scope" value="Bacteria"/>
</dbReference>
<dbReference type="HOGENOM" id="CLU_115353_1_1_6"/>
<dbReference type="Proteomes" id="UP000002493">
    <property type="component" value="Chromosome 1"/>
</dbReference>
<dbReference type="GO" id="GO:0003676">
    <property type="term" value="F:nucleic acid binding"/>
    <property type="evidence" value="ECO:0007669"/>
    <property type="project" value="InterPro"/>
</dbReference>
<dbReference type="CDD" id="cd20736">
    <property type="entry name" value="PoNe_Nuclease"/>
    <property type="match status" value="1"/>
</dbReference>
<dbReference type="Gene3D" id="3.40.1350.10">
    <property type="match status" value="1"/>
</dbReference>
<dbReference type="HAMAP" id="MF_00048">
    <property type="entry name" value="UPF0102"/>
    <property type="match status" value="1"/>
</dbReference>
<dbReference type="InterPro" id="IPR011335">
    <property type="entry name" value="Restrct_endonuc-II-like"/>
</dbReference>
<dbReference type="InterPro" id="IPR011856">
    <property type="entry name" value="tRNA_endonuc-like_dom_sf"/>
</dbReference>
<dbReference type="InterPro" id="IPR003509">
    <property type="entry name" value="UPF0102_YraN-like"/>
</dbReference>
<dbReference type="NCBIfam" id="NF009150">
    <property type="entry name" value="PRK12497.1-3"/>
    <property type="match status" value="1"/>
</dbReference>
<dbReference type="NCBIfam" id="TIGR00252">
    <property type="entry name" value="YraN family protein"/>
    <property type="match status" value="1"/>
</dbReference>
<dbReference type="PANTHER" id="PTHR34039">
    <property type="entry name" value="UPF0102 PROTEIN YRAN"/>
    <property type="match status" value="1"/>
</dbReference>
<dbReference type="PANTHER" id="PTHR34039:SF1">
    <property type="entry name" value="UPF0102 PROTEIN YRAN"/>
    <property type="match status" value="1"/>
</dbReference>
<dbReference type="Pfam" id="PF02021">
    <property type="entry name" value="UPF0102"/>
    <property type="match status" value="1"/>
</dbReference>
<dbReference type="SUPFAM" id="SSF52980">
    <property type="entry name" value="Restriction endonuclease-like"/>
    <property type="match status" value="1"/>
</dbReference>
<organism>
    <name type="scientific">Vibrio parahaemolyticus serotype O3:K6 (strain RIMD 2210633)</name>
    <dbReference type="NCBI Taxonomy" id="223926"/>
    <lineage>
        <taxon>Bacteria</taxon>
        <taxon>Pseudomonadati</taxon>
        <taxon>Pseudomonadota</taxon>
        <taxon>Gammaproteobacteria</taxon>
        <taxon>Vibrionales</taxon>
        <taxon>Vibrionaceae</taxon>
        <taxon>Vibrio</taxon>
    </lineage>
</organism>
<comment type="similarity">
    <text evidence="1">Belongs to the UPF0102 family.</text>
</comment>
<proteinExistence type="inferred from homology"/>
<gene>
    <name type="ordered locus">VP0448</name>
</gene>
<accession>Q87SH5</accession>
<name>Y448_VIBPA</name>